<keyword id="KW-0963">Cytoplasm</keyword>
<keyword id="KW-0227">DNA damage</keyword>
<keyword id="KW-0234">DNA repair</keyword>
<keyword id="KW-0378">Hydrolase</keyword>
<keyword id="KW-0479">Metal-binding</keyword>
<keyword id="KW-1185">Reference proteome</keyword>
<keyword id="KW-0346">Stress response</keyword>
<keyword id="KW-0862">Zinc</keyword>
<accession>B7L8Y4</accession>
<dbReference type="EC" id="3.1.2.-" evidence="1"/>
<dbReference type="EC" id="3.5.1.-" evidence="1"/>
<dbReference type="EC" id="3.5.1.124" evidence="1"/>
<dbReference type="EMBL" id="CU928145">
    <property type="protein sequence ID" value="CAU98066.1"/>
    <property type="molecule type" value="Genomic_DNA"/>
</dbReference>
<dbReference type="RefSeq" id="WP_000218221.1">
    <property type="nucleotide sequence ID" value="NC_011748.1"/>
</dbReference>
<dbReference type="SMR" id="B7L8Y4"/>
<dbReference type="MEROPS" id="C56.006"/>
<dbReference type="KEGG" id="eck:EC55989_2193"/>
<dbReference type="HOGENOM" id="CLU_066933_0_0_6"/>
<dbReference type="Proteomes" id="UP000000746">
    <property type="component" value="Chromosome"/>
</dbReference>
<dbReference type="GO" id="GO:0005737">
    <property type="term" value="C:cytoplasm"/>
    <property type="evidence" value="ECO:0007669"/>
    <property type="project" value="UniProtKB-SubCell"/>
</dbReference>
<dbReference type="GO" id="GO:0019172">
    <property type="term" value="F:glyoxalase III activity"/>
    <property type="evidence" value="ECO:0007669"/>
    <property type="project" value="TreeGrafter"/>
</dbReference>
<dbReference type="GO" id="GO:0036524">
    <property type="term" value="F:protein deglycase activity"/>
    <property type="evidence" value="ECO:0007669"/>
    <property type="project" value="UniProtKB-UniRule"/>
</dbReference>
<dbReference type="GO" id="GO:0016790">
    <property type="term" value="F:thiolester hydrolase activity"/>
    <property type="evidence" value="ECO:0007669"/>
    <property type="project" value="UniProtKB-UniRule"/>
</dbReference>
<dbReference type="GO" id="GO:0008270">
    <property type="term" value="F:zinc ion binding"/>
    <property type="evidence" value="ECO:0007669"/>
    <property type="project" value="UniProtKB-UniRule"/>
</dbReference>
<dbReference type="GO" id="GO:0006281">
    <property type="term" value="P:DNA repair"/>
    <property type="evidence" value="ECO:0007669"/>
    <property type="project" value="UniProtKB-UniRule"/>
</dbReference>
<dbReference type="GO" id="GO:0019243">
    <property type="term" value="P:methylglyoxal catabolic process to D-lactate via S-lactoyl-glutathione"/>
    <property type="evidence" value="ECO:0007669"/>
    <property type="project" value="TreeGrafter"/>
</dbReference>
<dbReference type="GO" id="GO:0030091">
    <property type="term" value="P:protein repair"/>
    <property type="evidence" value="ECO:0007669"/>
    <property type="project" value="UniProtKB-UniRule"/>
</dbReference>
<dbReference type="FunFam" id="3.40.50.880:FF:000026">
    <property type="entry name" value="Protein/nucleic acid deglycase HchA"/>
    <property type="match status" value="1"/>
</dbReference>
<dbReference type="Gene3D" id="3.40.50.880">
    <property type="match status" value="1"/>
</dbReference>
<dbReference type="HAMAP" id="MF_01046">
    <property type="entry name" value="Deglycase_HchA"/>
    <property type="match status" value="1"/>
</dbReference>
<dbReference type="InterPro" id="IPR029062">
    <property type="entry name" value="Class_I_gatase-like"/>
</dbReference>
<dbReference type="InterPro" id="IPR017283">
    <property type="entry name" value="HchA"/>
</dbReference>
<dbReference type="InterPro" id="IPR050325">
    <property type="entry name" value="Prot/Nucl_acid_deglycase"/>
</dbReference>
<dbReference type="NCBIfam" id="NF003168">
    <property type="entry name" value="PRK04155.1"/>
    <property type="match status" value="1"/>
</dbReference>
<dbReference type="PANTHER" id="PTHR48094">
    <property type="entry name" value="PROTEIN/NUCLEIC ACID DEGLYCASE DJ-1-RELATED"/>
    <property type="match status" value="1"/>
</dbReference>
<dbReference type="PANTHER" id="PTHR48094:SF20">
    <property type="entry name" value="PROTEIN_NUCLEIC ACID DEGLYCASE 1"/>
    <property type="match status" value="1"/>
</dbReference>
<dbReference type="PIRSF" id="PIRSF037798">
    <property type="entry name" value="Chaperone_HchA"/>
    <property type="match status" value="1"/>
</dbReference>
<dbReference type="SUPFAM" id="SSF52317">
    <property type="entry name" value="Class I glutamine amidotransferase-like"/>
    <property type="match status" value="1"/>
</dbReference>
<gene>
    <name evidence="1" type="primary">hchA</name>
    <name type="ordered locus">EC55989_2193</name>
</gene>
<organism>
    <name type="scientific">Escherichia coli (strain 55989 / EAEC)</name>
    <dbReference type="NCBI Taxonomy" id="585055"/>
    <lineage>
        <taxon>Bacteria</taxon>
        <taxon>Pseudomonadati</taxon>
        <taxon>Pseudomonadota</taxon>
        <taxon>Gammaproteobacteria</taxon>
        <taxon>Enterobacterales</taxon>
        <taxon>Enterobacteriaceae</taxon>
        <taxon>Escherichia</taxon>
    </lineage>
</organism>
<comment type="function">
    <text evidence="1">Protein and nucleotide deglycase that catalyzes the deglycation of the Maillard adducts formed between amino groups of proteins or nucleotides and reactive carbonyl groups of glyoxals. Thus, functions as a protein deglycase that repairs methylglyoxal- and glyoxal-glycated proteins, and releases repaired proteins and lactate or glycolate, respectively. Deglycates cysteine, arginine and lysine residues in proteins, and thus reactivates these proteins by reversing glycation by glyoxals. Acts on early glycation intermediates (hemithioacetals and aminocarbinols), preventing the formation of Schiff bases and advanced glycation endproducts (AGE). Also functions as a nucleotide deglycase able to repair glycated guanine in the free nucleotide pool (GTP, GDP, GMP, dGTP) and in DNA and RNA. Is thus involved in a major nucleotide repair system named guanine glycation repair (GG repair), dedicated to reversing methylglyoxal and glyoxal damage via nucleotide sanitization and direct nucleic acid repair. Plays an important role in protecting cells from carbonyl stress.</text>
</comment>
<comment type="catalytic activity">
    <reaction evidence="1">
        <text>N(omega)-(1-hydroxy-2-oxopropyl)-L-arginyl-[protein] + H2O = lactate + L-arginyl-[protein] + H(+)</text>
        <dbReference type="Rhea" id="RHEA:49548"/>
        <dbReference type="Rhea" id="RHEA-COMP:10532"/>
        <dbReference type="Rhea" id="RHEA-COMP:12428"/>
        <dbReference type="ChEBI" id="CHEBI:15377"/>
        <dbReference type="ChEBI" id="CHEBI:15378"/>
        <dbReference type="ChEBI" id="CHEBI:24996"/>
        <dbReference type="ChEBI" id="CHEBI:29965"/>
        <dbReference type="ChEBI" id="CHEBI:131708"/>
        <dbReference type="EC" id="3.5.1.124"/>
    </reaction>
</comment>
<comment type="catalytic activity">
    <reaction evidence="1">
        <text>N(6)-(1-hydroxy-2-oxopropyl)-L-lysyl-[protein] + H2O = lactate + L-lysyl-[protein] + H(+)</text>
        <dbReference type="Rhea" id="RHEA:49552"/>
        <dbReference type="Rhea" id="RHEA-COMP:9752"/>
        <dbReference type="Rhea" id="RHEA-COMP:12429"/>
        <dbReference type="ChEBI" id="CHEBI:15377"/>
        <dbReference type="ChEBI" id="CHEBI:15378"/>
        <dbReference type="ChEBI" id="CHEBI:24996"/>
        <dbReference type="ChEBI" id="CHEBI:29969"/>
        <dbReference type="ChEBI" id="CHEBI:131709"/>
        <dbReference type="EC" id="3.5.1.124"/>
    </reaction>
</comment>
<comment type="catalytic activity">
    <reaction evidence="1">
        <text>S-(1-hydroxy-2-oxopropyl)-L-cysteinyl-[protein] + H2O = lactate + L-cysteinyl-[protein] + H(+)</text>
        <dbReference type="Rhea" id="RHEA:49556"/>
        <dbReference type="Rhea" id="RHEA-COMP:10131"/>
        <dbReference type="Rhea" id="RHEA-COMP:12430"/>
        <dbReference type="ChEBI" id="CHEBI:15377"/>
        <dbReference type="ChEBI" id="CHEBI:15378"/>
        <dbReference type="ChEBI" id="CHEBI:24996"/>
        <dbReference type="ChEBI" id="CHEBI:29950"/>
        <dbReference type="ChEBI" id="CHEBI:131710"/>
        <dbReference type="EC" id="3.5.1.124"/>
    </reaction>
</comment>
<comment type="catalytic activity">
    <reaction evidence="1">
        <text>N(omega)-(1-hydroxy-2-oxoethyl)-L-arginyl-[protein] + H2O = L-arginyl-[protein] + glycolate + H(+)</text>
        <dbReference type="Rhea" id="RHEA:57188"/>
        <dbReference type="Rhea" id="RHEA-COMP:10532"/>
        <dbReference type="Rhea" id="RHEA-COMP:14844"/>
        <dbReference type="ChEBI" id="CHEBI:15377"/>
        <dbReference type="ChEBI" id="CHEBI:15378"/>
        <dbReference type="ChEBI" id="CHEBI:29805"/>
        <dbReference type="ChEBI" id="CHEBI:29965"/>
        <dbReference type="ChEBI" id="CHEBI:141553"/>
        <dbReference type="EC" id="3.5.1.124"/>
    </reaction>
</comment>
<comment type="catalytic activity">
    <reaction evidence="1">
        <text>N(6)-(1-hydroxy-2-oxoethyl)-L-lysyl-[protein] + H2O = glycolate + L-lysyl-[protein] + H(+)</text>
        <dbReference type="Rhea" id="RHEA:57192"/>
        <dbReference type="Rhea" id="RHEA-COMP:9752"/>
        <dbReference type="Rhea" id="RHEA-COMP:14845"/>
        <dbReference type="ChEBI" id="CHEBI:15377"/>
        <dbReference type="ChEBI" id="CHEBI:15378"/>
        <dbReference type="ChEBI" id="CHEBI:29805"/>
        <dbReference type="ChEBI" id="CHEBI:29969"/>
        <dbReference type="ChEBI" id="CHEBI:141554"/>
        <dbReference type="EC" id="3.5.1.124"/>
    </reaction>
</comment>
<comment type="catalytic activity">
    <reaction evidence="1">
        <text>S-(1-hydroxy-2-oxoethyl)-L-cysteinyl-[protein] + H2O = glycolate + L-cysteinyl-[protein] + H(+)</text>
        <dbReference type="Rhea" id="RHEA:57196"/>
        <dbReference type="Rhea" id="RHEA-COMP:10131"/>
        <dbReference type="Rhea" id="RHEA-COMP:14846"/>
        <dbReference type="ChEBI" id="CHEBI:15377"/>
        <dbReference type="ChEBI" id="CHEBI:15378"/>
        <dbReference type="ChEBI" id="CHEBI:29805"/>
        <dbReference type="ChEBI" id="CHEBI:29950"/>
        <dbReference type="ChEBI" id="CHEBI:141555"/>
        <dbReference type="EC" id="3.5.1.124"/>
    </reaction>
</comment>
<comment type="catalytic activity">
    <reaction evidence="1">
        <text>N(2)-(1-hydroxy-2-oxopropyl)-dGTP + H2O = lactate + dGTP + H(+)</text>
        <dbReference type="Rhea" id="RHEA:57244"/>
        <dbReference type="ChEBI" id="CHEBI:15377"/>
        <dbReference type="ChEBI" id="CHEBI:15378"/>
        <dbReference type="ChEBI" id="CHEBI:24996"/>
        <dbReference type="ChEBI" id="CHEBI:61429"/>
        <dbReference type="ChEBI" id="CHEBI:141569"/>
    </reaction>
</comment>
<comment type="catalytic activity">
    <reaction evidence="1">
        <text>N(2)-(1-hydroxy-2-oxopropyl)-GTP + H2O = lactate + GTP + H(+)</text>
        <dbReference type="Rhea" id="RHEA:57256"/>
        <dbReference type="ChEBI" id="CHEBI:15377"/>
        <dbReference type="ChEBI" id="CHEBI:15378"/>
        <dbReference type="ChEBI" id="CHEBI:24996"/>
        <dbReference type="ChEBI" id="CHEBI:37565"/>
        <dbReference type="ChEBI" id="CHEBI:141570"/>
    </reaction>
</comment>
<comment type="catalytic activity">
    <reaction evidence="1">
        <text>N(2)-(1-hydroxy-2-oxopropyl)-GDP + H2O = lactate + GDP + H(+)</text>
        <dbReference type="Rhea" id="RHEA:57260"/>
        <dbReference type="ChEBI" id="CHEBI:15377"/>
        <dbReference type="ChEBI" id="CHEBI:15378"/>
        <dbReference type="ChEBI" id="CHEBI:24996"/>
        <dbReference type="ChEBI" id="CHEBI:58189"/>
        <dbReference type="ChEBI" id="CHEBI:141573"/>
    </reaction>
</comment>
<comment type="catalytic activity">
    <reaction evidence="1">
        <text>N(2)-(1-hydroxy-2-oxopropyl)-GMP + H2O = lactate + GMP + H(+)</text>
        <dbReference type="Rhea" id="RHEA:57268"/>
        <dbReference type="ChEBI" id="CHEBI:15377"/>
        <dbReference type="ChEBI" id="CHEBI:15378"/>
        <dbReference type="ChEBI" id="CHEBI:24996"/>
        <dbReference type="ChEBI" id="CHEBI:58115"/>
        <dbReference type="ChEBI" id="CHEBI:141575"/>
    </reaction>
</comment>
<comment type="catalytic activity">
    <reaction evidence="1">
        <text>N(2)-(1-hydroxy-2-oxoethyl)-dGTP + H2O = dGTP + glycolate + H(+)</text>
        <dbReference type="Rhea" id="RHEA:57248"/>
        <dbReference type="ChEBI" id="CHEBI:15377"/>
        <dbReference type="ChEBI" id="CHEBI:15378"/>
        <dbReference type="ChEBI" id="CHEBI:29805"/>
        <dbReference type="ChEBI" id="CHEBI:61429"/>
        <dbReference type="ChEBI" id="CHEBI:141572"/>
    </reaction>
</comment>
<comment type="catalytic activity">
    <reaction evidence="1">
        <text>N(2)-(1-hydroxy-2-oxoethyl)-GTP + H2O = glycolate + GTP + H(+)</text>
        <dbReference type="Rhea" id="RHEA:57252"/>
        <dbReference type="ChEBI" id="CHEBI:15377"/>
        <dbReference type="ChEBI" id="CHEBI:15378"/>
        <dbReference type="ChEBI" id="CHEBI:29805"/>
        <dbReference type="ChEBI" id="CHEBI:37565"/>
        <dbReference type="ChEBI" id="CHEBI:141571"/>
    </reaction>
</comment>
<comment type="catalytic activity">
    <reaction evidence="1">
        <text>N(2)-(1-hydroxy-2-oxoethyl)-GDP + H2O = glycolate + GDP + H(+)</text>
        <dbReference type="Rhea" id="RHEA:57264"/>
        <dbReference type="ChEBI" id="CHEBI:15377"/>
        <dbReference type="ChEBI" id="CHEBI:15378"/>
        <dbReference type="ChEBI" id="CHEBI:29805"/>
        <dbReference type="ChEBI" id="CHEBI:58189"/>
        <dbReference type="ChEBI" id="CHEBI:141574"/>
    </reaction>
</comment>
<comment type="catalytic activity">
    <reaction evidence="1">
        <text>N(2)-(1-hydroxy-2-oxoethyl)-GMP + H2O = glycolate + GMP + H(+)</text>
        <dbReference type="Rhea" id="RHEA:57304"/>
        <dbReference type="ChEBI" id="CHEBI:15377"/>
        <dbReference type="ChEBI" id="CHEBI:15378"/>
        <dbReference type="ChEBI" id="CHEBI:29805"/>
        <dbReference type="ChEBI" id="CHEBI:58115"/>
        <dbReference type="ChEBI" id="CHEBI:141576"/>
    </reaction>
</comment>
<comment type="catalytic activity">
    <reaction evidence="1">
        <text>an N(2)-(1-hydroxy-2-oxopropyl)-guanosine in RNA + H2O = a guanosine in RNA + lactate + H(+)</text>
        <dbReference type="Rhea" id="RHEA:57288"/>
        <dbReference type="Rhea" id="RHEA-COMP:14855"/>
        <dbReference type="Rhea" id="RHEA-COMP:14858"/>
        <dbReference type="ChEBI" id="CHEBI:15377"/>
        <dbReference type="ChEBI" id="CHEBI:15378"/>
        <dbReference type="ChEBI" id="CHEBI:24996"/>
        <dbReference type="ChEBI" id="CHEBI:74269"/>
        <dbReference type="ChEBI" id="CHEBI:141580"/>
    </reaction>
</comment>
<comment type="catalytic activity">
    <reaction evidence="1">
        <text>an N(2)-(1-hydroxy-2-oxopropyl)-2'-deoxyguanosine in DNA + H2O = a 2'-deoxyguanosine in DNA + lactate + H(+)</text>
        <dbReference type="Rhea" id="RHEA:57300"/>
        <dbReference type="Rhea" id="RHEA-COMP:11367"/>
        <dbReference type="Rhea" id="RHEA-COMP:14856"/>
        <dbReference type="ChEBI" id="CHEBI:15377"/>
        <dbReference type="ChEBI" id="CHEBI:15378"/>
        <dbReference type="ChEBI" id="CHEBI:24996"/>
        <dbReference type="ChEBI" id="CHEBI:85445"/>
        <dbReference type="ChEBI" id="CHEBI:141578"/>
    </reaction>
</comment>
<comment type="catalytic activity">
    <reaction evidence="1">
        <text>an N(2)-(1-hydroxy-2-oxoethyl)-guanosine in RNA + H2O = a guanosine in RNA + glycolate + H(+)</text>
        <dbReference type="Rhea" id="RHEA:57292"/>
        <dbReference type="Rhea" id="RHEA-COMP:14855"/>
        <dbReference type="Rhea" id="RHEA-COMP:14859"/>
        <dbReference type="ChEBI" id="CHEBI:15377"/>
        <dbReference type="ChEBI" id="CHEBI:15378"/>
        <dbReference type="ChEBI" id="CHEBI:29805"/>
        <dbReference type="ChEBI" id="CHEBI:74269"/>
        <dbReference type="ChEBI" id="CHEBI:141581"/>
    </reaction>
</comment>
<comment type="catalytic activity">
    <reaction evidence="1">
        <text>an N(2)-(1-hydroxy-2-oxoethyl)-2'-deoxyguanosine in DNA + H2O = a 2'-deoxyguanosine in DNA + glycolate + H(+)</text>
        <dbReference type="Rhea" id="RHEA:57296"/>
        <dbReference type="Rhea" id="RHEA-COMP:11367"/>
        <dbReference type="Rhea" id="RHEA-COMP:14857"/>
        <dbReference type="ChEBI" id="CHEBI:15377"/>
        <dbReference type="ChEBI" id="CHEBI:15378"/>
        <dbReference type="ChEBI" id="CHEBI:29805"/>
        <dbReference type="ChEBI" id="CHEBI:85445"/>
        <dbReference type="ChEBI" id="CHEBI:141579"/>
    </reaction>
</comment>
<comment type="subunit">
    <text evidence="1">Homodimer.</text>
</comment>
<comment type="subcellular location">
    <subcellularLocation>
        <location evidence="1">Cytoplasm</location>
    </subcellularLocation>
</comment>
<comment type="induction">
    <text evidence="1">By heat shock.</text>
</comment>
<comment type="similarity">
    <text evidence="1">Belongs to the peptidase C56 family. HchA subfamily.</text>
</comment>
<feature type="chain" id="PRO_1000149603" description="Protein/nucleic acid deglycase HchA">
    <location>
        <begin position="1"/>
        <end position="283"/>
    </location>
</feature>
<feature type="active site" description="Nucleophile" evidence="1">
    <location>
        <position position="185"/>
    </location>
</feature>
<feature type="binding site" evidence="1">
    <location>
        <position position="86"/>
    </location>
    <ligand>
        <name>Zn(2+)</name>
        <dbReference type="ChEBI" id="CHEBI:29105"/>
    </ligand>
</feature>
<feature type="binding site" evidence="1">
    <location>
        <position position="91"/>
    </location>
    <ligand>
        <name>Zn(2+)</name>
        <dbReference type="ChEBI" id="CHEBI:29105"/>
    </ligand>
</feature>
<feature type="binding site" evidence="1">
    <location>
        <position position="123"/>
    </location>
    <ligand>
        <name>Zn(2+)</name>
        <dbReference type="ChEBI" id="CHEBI:29105"/>
    </ligand>
</feature>
<name>HCHA_ECO55</name>
<reference key="1">
    <citation type="journal article" date="2009" name="PLoS Genet.">
        <title>Organised genome dynamics in the Escherichia coli species results in highly diverse adaptive paths.</title>
        <authorList>
            <person name="Touchon M."/>
            <person name="Hoede C."/>
            <person name="Tenaillon O."/>
            <person name="Barbe V."/>
            <person name="Baeriswyl S."/>
            <person name="Bidet P."/>
            <person name="Bingen E."/>
            <person name="Bonacorsi S."/>
            <person name="Bouchier C."/>
            <person name="Bouvet O."/>
            <person name="Calteau A."/>
            <person name="Chiapello H."/>
            <person name="Clermont O."/>
            <person name="Cruveiller S."/>
            <person name="Danchin A."/>
            <person name="Diard M."/>
            <person name="Dossat C."/>
            <person name="Karoui M.E."/>
            <person name="Frapy E."/>
            <person name="Garry L."/>
            <person name="Ghigo J.M."/>
            <person name="Gilles A.M."/>
            <person name="Johnson J."/>
            <person name="Le Bouguenec C."/>
            <person name="Lescat M."/>
            <person name="Mangenot S."/>
            <person name="Martinez-Jehanne V."/>
            <person name="Matic I."/>
            <person name="Nassif X."/>
            <person name="Oztas S."/>
            <person name="Petit M.A."/>
            <person name="Pichon C."/>
            <person name="Rouy Z."/>
            <person name="Ruf C.S."/>
            <person name="Schneider D."/>
            <person name="Tourret J."/>
            <person name="Vacherie B."/>
            <person name="Vallenet D."/>
            <person name="Medigue C."/>
            <person name="Rocha E.P.C."/>
            <person name="Denamur E."/>
        </authorList>
    </citation>
    <scope>NUCLEOTIDE SEQUENCE [LARGE SCALE GENOMIC DNA]</scope>
    <source>
        <strain>55989 / EAEC</strain>
    </source>
</reference>
<sequence>MTVQTSKNPQVDIAEDNAFFPSEYSLSQYTSPVSDLDGVDYPKPYRGKHKILVIAADERYLPTDNGKLFSTGNHPIETLLPLYHLHAAGFEFEVATISGLMTKFEYWAMPHKDEKVMPFFEQHKSLFRNPKKLADVVASLNADSEYAAIFVPGGHGTLIGLPESQDVAAALQWAIKNDRFVISLCHGPAAFLALRHGDNPLNGYSICAFPDAADKQTPEIGYMPGHLTWYFGEELKKMGMNIINDDITGRVHKDRKLLTGDSPFAANALGKLAAQEMLAAYAG</sequence>
<proteinExistence type="inferred from homology"/>
<protein>
    <recommendedName>
        <fullName evidence="1">Protein/nucleic acid deglycase HchA</fullName>
        <ecNumber evidence="1">3.1.2.-</ecNumber>
        <ecNumber evidence="1">3.5.1.-</ecNumber>
        <ecNumber evidence="1">3.5.1.124</ecNumber>
    </recommendedName>
    <alternativeName>
        <fullName evidence="1">Maillard deglycase</fullName>
    </alternativeName>
</protein>
<evidence type="ECO:0000255" key="1">
    <source>
        <dbReference type="HAMAP-Rule" id="MF_01046"/>
    </source>
</evidence>